<proteinExistence type="inferred from homology"/>
<accession>Q0G9K5</accession>
<evidence type="ECO:0000255" key="1">
    <source>
        <dbReference type="HAMAP-Rule" id="MF_01305"/>
    </source>
</evidence>
<geneLocation type="chloroplast"/>
<gene>
    <name evidence="1" type="primary">psbJ</name>
</gene>
<organism>
    <name type="scientific">Liriodendron tulipifera</name>
    <name type="common">Tuliptree</name>
    <name type="synonym">Tulip poplar</name>
    <dbReference type="NCBI Taxonomy" id="3415"/>
    <lineage>
        <taxon>Eukaryota</taxon>
        <taxon>Viridiplantae</taxon>
        <taxon>Streptophyta</taxon>
        <taxon>Embryophyta</taxon>
        <taxon>Tracheophyta</taxon>
        <taxon>Spermatophyta</taxon>
        <taxon>Magnoliopsida</taxon>
        <taxon>Magnoliidae</taxon>
        <taxon>Magnoliales</taxon>
        <taxon>Magnoliaceae</taxon>
        <taxon>Liriodendron</taxon>
    </lineage>
</organism>
<name>PSBJ_LIRTU</name>
<feature type="chain" id="PRO_0000276101" description="Photosystem II reaction center protein J">
    <location>
        <begin position="1"/>
        <end position="40"/>
    </location>
</feature>
<feature type="transmembrane region" description="Helical" evidence="1">
    <location>
        <begin position="8"/>
        <end position="28"/>
    </location>
</feature>
<reference key="1">
    <citation type="journal article" date="2006" name="BMC Evol. Biol.">
        <title>Complete plastid genome sequences of Drimys, Liriodendron, and Piper: implications for the phylogenetic relationships of magnoliids.</title>
        <authorList>
            <person name="Cai Z."/>
            <person name="Penaflor C."/>
            <person name="Kuehl J.V."/>
            <person name="Leebens-Mack J."/>
            <person name="Carlson J.E."/>
            <person name="dePamphilis C.W."/>
            <person name="Boore J.L."/>
            <person name="Jansen R.K."/>
        </authorList>
    </citation>
    <scope>NUCLEOTIDE SEQUENCE [LARGE SCALE GENOMIC DNA]</scope>
</reference>
<dbReference type="EMBL" id="DQ899947">
    <property type="protein sequence ID" value="ABI32523.1"/>
    <property type="molecule type" value="Genomic_DNA"/>
</dbReference>
<dbReference type="RefSeq" id="YP_740216.1">
    <property type="nucleotide sequence ID" value="NC_008326.1"/>
</dbReference>
<dbReference type="SMR" id="Q0G9K5"/>
<dbReference type="GeneID" id="4266638"/>
<dbReference type="GO" id="GO:0009535">
    <property type="term" value="C:chloroplast thylakoid membrane"/>
    <property type="evidence" value="ECO:0007669"/>
    <property type="project" value="UniProtKB-SubCell"/>
</dbReference>
<dbReference type="GO" id="GO:0009539">
    <property type="term" value="C:photosystem II reaction center"/>
    <property type="evidence" value="ECO:0007669"/>
    <property type="project" value="InterPro"/>
</dbReference>
<dbReference type="GO" id="GO:0015979">
    <property type="term" value="P:photosynthesis"/>
    <property type="evidence" value="ECO:0007669"/>
    <property type="project" value="UniProtKB-UniRule"/>
</dbReference>
<dbReference type="Gene3D" id="6.10.250.2070">
    <property type="match status" value="1"/>
</dbReference>
<dbReference type="HAMAP" id="MF_01305">
    <property type="entry name" value="PSII_PsbJ"/>
    <property type="match status" value="1"/>
</dbReference>
<dbReference type="InterPro" id="IPR002682">
    <property type="entry name" value="PSII_PsbJ"/>
</dbReference>
<dbReference type="InterPro" id="IPR037267">
    <property type="entry name" value="PSII_PsbJ_sf"/>
</dbReference>
<dbReference type="NCBIfam" id="NF002722">
    <property type="entry name" value="PRK02565.1"/>
    <property type="match status" value="1"/>
</dbReference>
<dbReference type="PANTHER" id="PTHR34812">
    <property type="entry name" value="PHOTOSYSTEM II REACTION CENTER PROTEIN J"/>
    <property type="match status" value="1"/>
</dbReference>
<dbReference type="PANTHER" id="PTHR34812:SF3">
    <property type="entry name" value="PHOTOSYSTEM II REACTION CENTER PROTEIN J"/>
    <property type="match status" value="1"/>
</dbReference>
<dbReference type="Pfam" id="PF01788">
    <property type="entry name" value="PsbJ"/>
    <property type="match status" value="1"/>
</dbReference>
<dbReference type="SUPFAM" id="SSF161021">
    <property type="entry name" value="Photosystem II reaction center protein J, PsbJ"/>
    <property type="match status" value="1"/>
</dbReference>
<protein>
    <recommendedName>
        <fullName evidence="1">Photosystem II reaction center protein J</fullName>
        <shortName evidence="1">PSII-J</shortName>
    </recommendedName>
</protein>
<comment type="function">
    <text evidence="1">One of the components of the core complex of photosystem II (PSII). PSII is a light-driven water:plastoquinone oxidoreductase that uses light energy to abstract electrons from H(2)O, generating O(2) and a proton gradient subsequently used for ATP formation. It consists of a core antenna complex that captures photons, and an electron transfer chain that converts photonic excitation into a charge separation.</text>
</comment>
<comment type="subunit">
    <text evidence="1">PSII is composed of 1 copy each of membrane proteins PsbA, PsbB, PsbC, PsbD, PsbE, PsbF, PsbH, PsbI, PsbJ, PsbK, PsbL, PsbM, PsbT, PsbX, PsbY, PsbZ, Psb30/Ycf12, at least 3 peripheral proteins of the oxygen-evolving complex and a large number of cofactors. It forms dimeric complexes.</text>
</comment>
<comment type="subcellular location">
    <subcellularLocation>
        <location evidence="1">Plastid</location>
        <location evidence="1">Chloroplast thylakoid membrane</location>
        <topology evidence="1">Single-pass membrane protein</topology>
    </subcellularLocation>
</comment>
<comment type="similarity">
    <text evidence="1">Belongs to the PsbJ family.</text>
</comment>
<sequence>MADTTGRIPLWLIGTVTGIPVIGSMGIFFYGSYSGLGSSL</sequence>
<keyword id="KW-0150">Chloroplast</keyword>
<keyword id="KW-0472">Membrane</keyword>
<keyword id="KW-0602">Photosynthesis</keyword>
<keyword id="KW-0604">Photosystem II</keyword>
<keyword id="KW-0934">Plastid</keyword>
<keyword id="KW-0674">Reaction center</keyword>
<keyword id="KW-0793">Thylakoid</keyword>
<keyword id="KW-0812">Transmembrane</keyword>
<keyword id="KW-1133">Transmembrane helix</keyword>